<proteinExistence type="inferred from homology"/>
<organism>
    <name type="scientific">Mesorhizobium japonicum (strain LMG 29417 / CECT 9101 / MAFF 303099)</name>
    <name type="common">Mesorhizobium loti (strain MAFF 303099)</name>
    <dbReference type="NCBI Taxonomy" id="266835"/>
    <lineage>
        <taxon>Bacteria</taxon>
        <taxon>Pseudomonadati</taxon>
        <taxon>Pseudomonadota</taxon>
        <taxon>Alphaproteobacteria</taxon>
        <taxon>Hyphomicrobiales</taxon>
        <taxon>Phyllobacteriaceae</taxon>
        <taxon>Mesorhizobium</taxon>
    </lineage>
</organism>
<evidence type="ECO:0000255" key="1">
    <source>
        <dbReference type="HAMAP-Rule" id="MF_00051"/>
    </source>
</evidence>
<name>GLYA1_RHILO</name>
<protein>
    <recommendedName>
        <fullName evidence="1">Serine hydroxymethyltransferase 1</fullName>
        <shortName evidence="1">SHMT 1</shortName>
        <shortName evidence="1">Serine methylase 1</shortName>
        <ecNumber evidence="1">2.1.2.1</ecNumber>
    </recommendedName>
</protein>
<reference key="1">
    <citation type="journal article" date="2000" name="DNA Res.">
        <title>Complete genome structure of the nitrogen-fixing symbiotic bacterium Mesorhizobium loti.</title>
        <authorList>
            <person name="Kaneko T."/>
            <person name="Nakamura Y."/>
            <person name="Sato S."/>
            <person name="Asamizu E."/>
            <person name="Kato T."/>
            <person name="Sasamoto S."/>
            <person name="Watanabe A."/>
            <person name="Idesawa K."/>
            <person name="Ishikawa A."/>
            <person name="Kawashima K."/>
            <person name="Kimura T."/>
            <person name="Kishida Y."/>
            <person name="Kiyokawa C."/>
            <person name="Kohara M."/>
            <person name="Matsumoto M."/>
            <person name="Matsuno A."/>
            <person name="Mochizuki Y."/>
            <person name="Nakayama S."/>
            <person name="Nakazaki N."/>
            <person name="Shimpo S."/>
            <person name="Sugimoto M."/>
            <person name="Takeuchi C."/>
            <person name="Yamada M."/>
            <person name="Tabata S."/>
        </authorList>
    </citation>
    <scope>NUCLEOTIDE SEQUENCE [LARGE SCALE GENOMIC DNA]</scope>
    <source>
        <strain>LMG 29417 / CECT 9101 / MAFF 303099</strain>
    </source>
</reference>
<sequence length="437" mass="46769">MATAAAASNKFESFFETTLEDADPEIFGAIRNELGRQRHEIELIASENIVSRAVLEAQGSIMTNKYAEGYPGKRYYGGCQFVDVAEELAIERAKKLFGCNFANVQPNSGSQMNQAVFLALLQPGDTFMGLDLNSGGHLTHGSPVNMSGKWFKVVSYGVRKEDHLLDMDAIEKTAHETKPKLILAGGTAYSRIWDWKRFREIADAVGAYLMVDMAHIAGLVAGGVHPSPLPHAHVVTTTTHKSLRGPRGGMILCNDEDIAKKMNSAVFPGLQGGPLMHVIAAKAVAFGEALKPSFKVYAESVAANAKALASSLKETGLDIVSGGTDNHLMLVDLRPKNATGKRAEAALGRANITCNKNGIPFDPEKPFVTSGVRLGTPAGTTRGFGQAEFREIGKLIAEVLDGLKIANSDEGNAAVEAAVKAKVVALTDRFPLYPYLG</sequence>
<feature type="chain" id="PRO_0000113646" description="Serine hydroxymethyltransferase 1">
    <location>
        <begin position="1"/>
        <end position="437"/>
    </location>
</feature>
<feature type="binding site" evidence="1">
    <location>
        <position position="132"/>
    </location>
    <ligand>
        <name>(6S)-5,6,7,8-tetrahydrofolate</name>
        <dbReference type="ChEBI" id="CHEBI:57453"/>
    </ligand>
</feature>
<feature type="binding site" evidence="1">
    <location>
        <begin position="136"/>
        <end position="138"/>
    </location>
    <ligand>
        <name>(6S)-5,6,7,8-tetrahydrofolate</name>
        <dbReference type="ChEBI" id="CHEBI:57453"/>
    </ligand>
</feature>
<feature type="site" description="Plays an important role in substrate specificity" evidence="1">
    <location>
        <position position="240"/>
    </location>
</feature>
<feature type="modified residue" description="N6-(pyridoxal phosphate)lysine" evidence="1">
    <location>
        <position position="241"/>
    </location>
</feature>
<gene>
    <name evidence="1" type="primary">glyA1</name>
    <name type="ordered locus">mlr8400</name>
</gene>
<keyword id="KW-0028">Amino-acid biosynthesis</keyword>
<keyword id="KW-0963">Cytoplasm</keyword>
<keyword id="KW-0554">One-carbon metabolism</keyword>
<keyword id="KW-0663">Pyridoxal phosphate</keyword>
<keyword id="KW-0808">Transferase</keyword>
<accession>Q983B6</accession>
<comment type="function">
    <text evidence="1">Catalyzes the reversible interconversion of serine and glycine with tetrahydrofolate (THF) serving as the one-carbon carrier. This reaction serves as the major source of one-carbon groups required for the biosynthesis of purines, thymidylate, methionine, and other important biomolecules. Also exhibits THF-independent aldolase activity toward beta-hydroxyamino acids, producing glycine and aldehydes, via a retro-aldol mechanism.</text>
</comment>
<comment type="catalytic activity">
    <reaction evidence="1">
        <text>(6R)-5,10-methylene-5,6,7,8-tetrahydrofolate + glycine + H2O = (6S)-5,6,7,8-tetrahydrofolate + L-serine</text>
        <dbReference type="Rhea" id="RHEA:15481"/>
        <dbReference type="ChEBI" id="CHEBI:15377"/>
        <dbReference type="ChEBI" id="CHEBI:15636"/>
        <dbReference type="ChEBI" id="CHEBI:33384"/>
        <dbReference type="ChEBI" id="CHEBI:57305"/>
        <dbReference type="ChEBI" id="CHEBI:57453"/>
        <dbReference type="EC" id="2.1.2.1"/>
    </reaction>
</comment>
<comment type="cofactor">
    <cofactor evidence="1">
        <name>pyridoxal 5'-phosphate</name>
        <dbReference type="ChEBI" id="CHEBI:597326"/>
    </cofactor>
</comment>
<comment type="pathway">
    <text evidence="1">One-carbon metabolism; tetrahydrofolate interconversion.</text>
</comment>
<comment type="pathway">
    <text evidence="1">Amino-acid biosynthesis; glycine biosynthesis; glycine from L-serine: step 1/1.</text>
</comment>
<comment type="subunit">
    <text evidence="1">Homodimer.</text>
</comment>
<comment type="subcellular location">
    <subcellularLocation>
        <location evidence="1">Cytoplasm</location>
    </subcellularLocation>
</comment>
<comment type="similarity">
    <text evidence="1">Belongs to the SHMT family.</text>
</comment>
<dbReference type="EC" id="2.1.2.1" evidence="1"/>
<dbReference type="EMBL" id="BA000012">
    <property type="protein sequence ID" value="BAB54290.1"/>
    <property type="molecule type" value="Genomic_DNA"/>
</dbReference>
<dbReference type="SMR" id="Q983B6"/>
<dbReference type="KEGG" id="mlo:mlr8400"/>
<dbReference type="eggNOG" id="COG0112">
    <property type="taxonomic scope" value="Bacteria"/>
</dbReference>
<dbReference type="HOGENOM" id="CLU_022477_2_1_5"/>
<dbReference type="UniPathway" id="UPA00193"/>
<dbReference type="UniPathway" id="UPA00288">
    <property type="reaction ID" value="UER01023"/>
</dbReference>
<dbReference type="Proteomes" id="UP000000552">
    <property type="component" value="Chromosome"/>
</dbReference>
<dbReference type="GO" id="GO:0005829">
    <property type="term" value="C:cytosol"/>
    <property type="evidence" value="ECO:0007669"/>
    <property type="project" value="TreeGrafter"/>
</dbReference>
<dbReference type="GO" id="GO:0004372">
    <property type="term" value="F:glycine hydroxymethyltransferase activity"/>
    <property type="evidence" value="ECO:0007669"/>
    <property type="project" value="UniProtKB-UniRule"/>
</dbReference>
<dbReference type="GO" id="GO:0030170">
    <property type="term" value="F:pyridoxal phosphate binding"/>
    <property type="evidence" value="ECO:0007669"/>
    <property type="project" value="UniProtKB-UniRule"/>
</dbReference>
<dbReference type="GO" id="GO:0019264">
    <property type="term" value="P:glycine biosynthetic process from serine"/>
    <property type="evidence" value="ECO:0007669"/>
    <property type="project" value="UniProtKB-UniRule"/>
</dbReference>
<dbReference type="GO" id="GO:0035999">
    <property type="term" value="P:tetrahydrofolate interconversion"/>
    <property type="evidence" value="ECO:0007669"/>
    <property type="project" value="UniProtKB-UniRule"/>
</dbReference>
<dbReference type="CDD" id="cd00378">
    <property type="entry name" value="SHMT"/>
    <property type="match status" value="1"/>
</dbReference>
<dbReference type="FunFam" id="3.40.640.10:FF:000001">
    <property type="entry name" value="Serine hydroxymethyltransferase"/>
    <property type="match status" value="1"/>
</dbReference>
<dbReference type="FunFam" id="3.90.1150.10:FF:000003">
    <property type="entry name" value="Serine hydroxymethyltransferase"/>
    <property type="match status" value="1"/>
</dbReference>
<dbReference type="Gene3D" id="3.90.1150.10">
    <property type="entry name" value="Aspartate Aminotransferase, domain 1"/>
    <property type="match status" value="1"/>
</dbReference>
<dbReference type="Gene3D" id="3.40.640.10">
    <property type="entry name" value="Type I PLP-dependent aspartate aminotransferase-like (Major domain)"/>
    <property type="match status" value="1"/>
</dbReference>
<dbReference type="HAMAP" id="MF_00051">
    <property type="entry name" value="SHMT"/>
    <property type="match status" value="1"/>
</dbReference>
<dbReference type="InterPro" id="IPR015424">
    <property type="entry name" value="PyrdxlP-dep_Trfase"/>
</dbReference>
<dbReference type="InterPro" id="IPR015421">
    <property type="entry name" value="PyrdxlP-dep_Trfase_major"/>
</dbReference>
<dbReference type="InterPro" id="IPR015422">
    <property type="entry name" value="PyrdxlP-dep_Trfase_small"/>
</dbReference>
<dbReference type="InterPro" id="IPR001085">
    <property type="entry name" value="Ser_HO-MeTrfase"/>
</dbReference>
<dbReference type="InterPro" id="IPR049943">
    <property type="entry name" value="Ser_HO-MeTrfase-like"/>
</dbReference>
<dbReference type="InterPro" id="IPR019798">
    <property type="entry name" value="Ser_HO-MeTrfase_PLP_BS"/>
</dbReference>
<dbReference type="InterPro" id="IPR039429">
    <property type="entry name" value="SHMT-like_dom"/>
</dbReference>
<dbReference type="NCBIfam" id="NF000586">
    <property type="entry name" value="PRK00011.1"/>
    <property type="match status" value="1"/>
</dbReference>
<dbReference type="PANTHER" id="PTHR11680">
    <property type="entry name" value="SERINE HYDROXYMETHYLTRANSFERASE"/>
    <property type="match status" value="1"/>
</dbReference>
<dbReference type="PANTHER" id="PTHR11680:SF35">
    <property type="entry name" value="SERINE HYDROXYMETHYLTRANSFERASE 1"/>
    <property type="match status" value="1"/>
</dbReference>
<dbReference type="Pfam" id="PF00464">
    <property type="entry name" value="SHMT"/>
    <property type="match status" value="1"/>
</dbReference>
<dbReference type="PIRSF" id="PIRSF000412">
    <property type="entry name" value="SHMT"/>
    <property type="match status" value="1"/>
</dbReference>
<dbReference type="SUPFAM" id="SSF53383">
    <property type="entry name" value="PLP-dependent transferases"/>
    <property type="match status" value="1"/>
</dbReference>
<dbReference type="PROSITE" id="PS00096">
    <property type="entry name" value="SHMT"/>
    <property type="match status" value="1"/>
</dbReference>